<sequence length="380" mass="41118">MRMQTKLIHGGISEDATTGAVSVPIYQTSTYRQDAIGRHKGYEYSRSGNPTRFALEELIADLEGGVKGFAFASGLAGIHAVFSLLQSGDHVLLGDDVYGGTFRLFNQVLVKNGLSCTIIDTSDISQIKKAIKPNTKALYLETPSNPLLKITDLAQCASVAKDHGLLTIVDNTFATPYYQNPLLLGADIVAHSGTKYLGGHSDVVAGLVTTNNEALAQEIAFFQNAIGGVLGPQDSWLLQRGIKTLGLRMEAHQKNALCVAEFLEKHPKVERVYYPGLPTHPNYELAKKQMRGFSGMLSFTLKNDSEAVAFVESLKLFILGESLGGVESLVGIPAFMTHACIPKTQREAAGIRDGLVRLSVGIEHEQDLLEDLEQAFAKIG</sequence>
<evidence type="ECO:0000250" key="1"/>
<evidence type="ECO:0000305" key="2"/>
<evidence type="ECO:0007829" key="3">
    <source>
        <dbReference type="PDB" id="4L0O"/>
    </source>
</evidence>
<comment type="function">
    <text evidence="1">Catalyzes the formation of L-cystathionine from O-succinyl-L-homoserine (OSHS) and L-cysteine, via a gamma-replacement reaction. In the absence of thiol, catalyzes gamma-elimination to form 2-oxobutanoate, succinate and ammonia (By similarity).</text>
</comment>
<comment type="catalytic activity">
    <reaction>
        <text>O-succinyl-L-homoserine + L-cysteine = L,L-cystathionine + succinate + H(+)</text>
        <dbReference type="Rhea" id="RHEA:20397"/>
        <dbReference type="ChEBI" id="CHEBI:15378"/>
        <dbReference type="ChEBI" id="CHEBI:30031"/>
        <dbReference type="ChEBI" id="CHEBI:35235"/>
        <dbReference type="ChEBI" id="CHEBI:57661"/>
        <dbReference type="ChEBI" id="CHEBI:58161"/>
        <dbReference type="EC" id="2.5.1.48"/>
    </reaction>
</comment>
<comment type="cofactor">
    <cofactor evidence="1">
        <name>pyridoxal 5'-phosphate</name>
        <dbReference type="ChEBI" id="CHEBI:597326"/>
    </cofactor>
    <text evidence="1">Binds 1 pyridoxal phosphate per subunit.</text>
</comment>
<comment type="subunit">
    <text evidence="1">Homotetramer.</text>
</comment>
<comment type="subcellular location">
    <subcellularLocation>
        <location evidence="1">Cytoplasm</location>
    </subcellularLocation>
</comment>
<comment type="similarity">
    <text evidence="2">Belongs to the trans-sulfuration enzymes family.</text>
</comment>
<name>METB_HELPY</name>
<keyword id="KW-0002">3D-structure</keyword>
<keyword id="KW-0028">Amino-acid biosynthesis</keyword>
<keyword id="KW-0963">Cytoplasm</keyword>
<keyword id="KW-0486">Methionine biosynthesis</keyword>
<keyword id="KW-0663">Pyridoxal phosphate</keyword>
<keyword id="KW-1185">Reference proteome</keyword>
<keyword id="KW-0808">Transferase</keyword>
<protein>
    <recommendedName>
        <fullName>Cystathionine gamma-synthase</fullName>
        <shortName>CGS</shortName>
        <ecNumber>2.5.1.48</ecNumber>
    </recommendedName>
    <alternativeName>
        <fullName>O-succinylhomoserine (thiol)-lyase</fullName>
    </alternativeName>
</protein>
<organism>
    <name type="scientific">Helicobacter pylori (strain ATCC 700392 / 26695)</name>
    <name type="common">Campylobacter pylori</name>
    <dbReference type="NCBI Taxonomy" id="85962"/>
    <lineage>
        <taxon>Bacteria</taxon>
        <taxon>Pseudomonadati</taxon>
        <taxon>Campylobacterota</taxon>
        <taxon>Epsilonproteobacteria</taxon>
        <taxon>Campylobacterales</taxon>
        <taxon>Helicobacteraceae</taxon>
        <taxon>Helicobacter</taxon>
    </lineage>
</organism>
<feature type="chain" id="PRO_0000114758" description="Cystathionine gamma-synthase">
    <location>
        <begin position="1"/>
        <end position="380"/>
    </location>
</feature>
<feature type="modified residue" description="N6-(pyridoxal phosphate)lysine" evidence="1">
    <location>
        <position position="195"/>
    </location>
</feature>
<feature type="helix" evidence="3">
    <location>
        <begin position="3"/>
        <end position="9"/>
    </location>
</feature>
<feature type="strand" evidence="3">
    <location>
        <begin position="10"/>
        <end position="12"/>
    </location>
</feature>
<feature type="turn" evidence="3">
    <location>
        <begin position="16"/>
        <end position="18"/>
    </location>
</feature>
<feature type="turn" evidence="3">
    <location>
        <begin position="45"/>
        <end position="47"/>
    </location>
</feature>
<feature type="helix" evidence="3">
    <location>
        <begin position="50"/>
        <end position="63"/>
    </location>
</feature>
<feature type="strand" evidence="3">
    <location>
        <begin position="66"/>
        <end position="73"/>
    </location>
</feature>
<feature type="helix" evidence="3">
    <location>
        <begin position="74"/>
        <end position="82"/>
    </location>
</feature>
<feature type="strand" evidence="3">
    <location>
        <begin position="90"/>
        <end position="94"/>
    </location>
</feature>
<feature type="helix" evidence="3">
    <location>
        <begin position="99"/>
        <end position="107"/>
    </location>
</feature>
<feature type="helix" evidence="3">
    <location>
        <begin position="110"/>
        <end position="112"/>
    </location>
</feature>
<feature type="strand" evidence="3">
    <location>
        <begin position="115"/>
        <end position="119"/>
    </location>
</feature>
<feature type="helix" evidence="3">
    <location>
        <begin position="124"/>
        <end position="130"/>
    </location>
</feature>
<feature type="strand" evidence="3">
    <location>
        <begin position="135"/>
        <end position="143"/>
    </location>
</feature>
<feature type="turn" evidence="3">
    <location>
        <begin position="145"/>
        <end position="147"/>
    </location>
</feature>
<feature type="helix" evidence="3">
    <location>
        <begin position="153"/>
        <end position="161"/>
    </location>
</feature>
<feature type="turn" evidence="3">
    <location>
        <begin position="162"/>
        <end position="164"/>
    </location>
</feature>
<feature type="strand" evidence="3">
    <location>
        <begin position="166"/>
        <end position="170"/>
    </location>
</feature>
<feature type="strand" evidence="3">
    <location>
        <begin position="172"/>
        <end position="174"/>
    </location>
</feature>
<feature type="turn" evidence="3">
    <location>
        <begin position="176"/>
        <end position="178"/>
    </location>
</feature>
<feature type="helix" evidence="3">
    <location>
        <begin position="181"/>
        <end position="184"/>
    </location>
</feature>
<feature type="strand" evidence="3">
    <location>
        <begin position="187"/>
        <end position="192"/>
    </location>
</feature>
<feature type="turn" evidence="3">
    <location>
        <begin position="193"/>
        <end position="198"/>
    </location>
</feature>
<feature type="strand" evidence="3">
    <location>
        <begin position="206"/>
        <end position="211"/>
    </location>
</feature>
<feature type="helix" evidence="3">
    <location>
        <begin position="213"/>
        <end position="226"/>
    </location>
</feature>
<feature type="helix" evidence="3">
    <location>
        <begin position="232"/>
        <end position="242"/>
    </location>
</feature>
<feature type="helix" evidence="3">
    <location>
        <begin position="245"/>
        <end position="264"/>
    </location>
</feature>
<feature type="strand" evidence="3">
    <location>
        <begin position="267"/>
        <end position="273"/>
    </location>
</feature>
<feature type="helix" evidence="3">
    <location>
        <begin position="283"/>
        <end position="289"/>
    </location>
</feature>
<feature type="strand" evidence="3">
    <location>
        <begin position="295"/>
        <end position="303"/>
    </location>
</feature>
<feature type="helix" evidence="3">
    <location>
        <begin position="306"/>
        <end position="312"/>
    </location>
</feature>
<feature type="strand" evidence="3">
    <location>
        <begin position="315"/>
        <end position="319"/>
    </location>
</feature>
<feature type="strand" evidence="3">
    <location>
        <begin position="324"/>
        <end position="327"/>
    </location>
</feature>
<feature type="strand" evidence="3">
    <location>
        <begin position="329"/>
        <end position="331"/>
    </location>
</feature>
<feature type="turn" evidence="3">
    <location>
        <begin position="333"/>
        <end position="340"/>
    </location>
</feature>
<feature type="helix" evidence="3">
    <location>
        <begin position="343"/>
        <end position="348"/>
    </location>
</feature>
<feature type="strand" evidence="3">
    <location>
        <begin position="355"/>
        <end position="359"/>
    </location>
</feature>
<feature type="helix" evidence="3">
    <location>
        <begin position="365"/>
        <end position="377"/>
    </location>
</feature>
<reference key="1">
    <citation type="journal article" date="1997" name="Nature">
        <title>The complete genome sequence of the gastric pathogen Helicobacter pylori.</title>
        <authorList>
            <person name="Tomb J.-F."/>
            <person name="White O."/>
            <person name="Kerlavage A.R."/>
            <person name="Clayton R.A."/>
            <person name="Sutton G.G."/>
            <person name="Fleischmann R.D."/>
            <person name="Ketchum K.A."/>
            <person name="Klenk H.-P."/>
            <person name="Gill S.R."/>
            <person name="Dougherty B.A."/>
            <person name="Nelson K.E."/>
            <person name="Quackenbush J."/>
            <person name="Zhou L."/>
            <person name="Kirkness E.F."/>
            <person name="Peterson S.N."/>
            <person name="Loftus B.J."/>
            <person name="Richardson D.L."/>
            <person name="Dodson R.J."/>
            <person name="Khalak H.G."/>
            <person name="Glodek A."/>
            <person name="McKenney K."/>
            <person name="FitzGerald L.M."/>
            <person name="Lee N."/>
            <person name="Adams M.D."/>
            <person name="Hickey E.K."/>
            <person name="Berg D.E."/>
            <person name="Gocayne J.D."/>
            <person name="Utterback T.R."/>
            <person name="Peterson J.D."/>
            <person name="Kelley J.M."/>
            <person name="Cotton M.D."/>
            <person name="Weidman J.F."/>
            <person name="Fujii C."/>
            <person name="Bowman C."/>
            <person name="Watthey L."/>
            <person name="Wallin E."/>
            <person name="Hayes W.S."/>
            <person name="Borodovsky M."/>
            <person name="Karp P.D."/>
            <person name="Smith H.O."/>
            <person name="Fraser C.M."/>
            <person name="Venter J.C."/>
        </authorList>
    </citation>
    <scope>NUCLEOTIDE SEQUENCE [LARGE SCALE GENOMIC DNA]</scope>
    <source>
        <strain>ATCC 700392 / 26695</strain>
    </source>
</reference>
<dbReference type="EC" id="2.5.1.48"/>
<dbReference type="EMBL" id="AE000511">
    <property type="protein sequence ID" value="AAD07176.1"/>
    <property type="molecule type" value="Genomic_DNA"/>
</dbReference>
<dbReference type="PIR" id="B64533">
    <property type="entry name" value="B64533"/>
</dbReference>
<dbReference type="RefSeq" id="NP_206906.1">
    <property type="nucleotide sequence ID" value="NC_000915.1"/>
</dbReference>
<dbReference type="RefSeq" id="WP_001242837.1">
    <property type="nucleotide sequence ID" value="NC_018939.1"/>
</dbReference>
<dbReference type="PDB" id="4L0O">
    <property type="method" value="X-ray"/>
    <property type="resolution" value="2.76 A"/>
    <property type="chains" value="A/C/E/G/H/K/M/O=1-380"/>
</dbReference>
<dbReference type="PDBsum" id="4L0O"/>
<dbReference type="SMR" id="P56069"/>
<dbReference type="FunCoup" id="P56069">
    <property type="interactions" value="301"/>
</dbReference>
<dbReference type="IntAct" id="P56069">
    <property type="interactions" value="1"/>
</dbReference>
<dbReference type="STRING" id="85962.HP_0106"/>
<dbReference type="PaxDb" id="85962-C694_00525"/>
<dbReference type="EnsemblBacteria" id="AAD07176">
    <property type="protein sequence ID" value="AAD07176"/>
    <property type="gene ID" value="HP_0106"/>
</dbReference>
<dbReference type="KEGG" id="heo:C694_00525"/>
<dbReference type="KEGG" id="hpy:HP_0106"/>
<dbReference type="PATRIC" id="fig|85962.47.peg.115"/>
<dbReference type="eggNOG" id="COG0626">
    <property type="taxonomic scope" value="Bacteria"/>
</dbReference>
<dbReference type="InParanoid" id="P56069"/>
<dbReference type="OrthoDB" id="9805807at2"/>
<dbReference type="PhylomeDB" id="P56069"/>
<dbReference type="BioCyc" id="MetaCyc:HP_RS00540-MONOMER"/>
<dbReference type="EvolutionaryTrace" id="P56069"/>
<dbReference type="Proteomes" id="UP000000429">
    <property type="component" value="Chromosome"/>
</dbReference>
<dbReference type="GO" id="GO:0005737">
    <property type="term" value="C:cytoplasm"/>
    <property type="evidence" value="ECO:0000318"/>
    <property type="project" value="GO_Central"/>
</dbReference>
<dbReference type="GO" id="GO:0004123">
    <property type="term" value="F:cystathionine gamma-lyase activity"/>
    <property type="evidence" value="ECO:0000318"/>
    <property type="project" value="GO_Central"/>
</dbReference>
<dbReference type="GO" id="GO:0003962">
    <property type="term" value="F:cystathionine gamma-synthase activity"/>
    <property type="evidence" value="ECO:0000318"/>
    <property type="project" value="GO_Central"/>
</dbReference>
<dbReference type="GO" id="GO:0030170">
    <property type="term" value="F:pyridoxal phosphate binding"/>
    <property type="evidence" value="ECO:0000318"/>
    <property type="project" value="GO_Central"/>
</dbReference>
<dbReference type="GO" id="GO:0019343">
    <property type="term" value="P:cysteine biosynthetic process via cystathionine"/>
    <property type="evidence" value="ECO:0000318"/>
    <property type="project" value="GO_Central"/>
</dbReference>
<dbReference type="GO" id="GO:0009086">
    <property type="term" value="P:methionine biosynthetic process"/>
    <property type="evidence" value="ECO:0007669"/>
    <property type="project" value="UniProtKB-KW"/>
</dbReference>
<dbReference type="GO" id="GO:0019346">
    <property type="term" value="P:transsulfuration"/>
    <property type="evidence" value="ECO:0000318"/>
    <property type="project" value="GO_Central"/>
</dbReference>
<dbReference type="CDD" id="cd00614">
    <property type="entry name" value="CGS_like"/>
    <property type="match status" value="1"/>
</dbReference>
<dbReference type="FunFam" id="3.90.1150.10:FF:000008">
    <property type="entry name" value="Cystathionine gamma-synthase"/>
    <property type="match status" value="1"/>
</dbReference>
<dbReference type="FunFam" id="3.40.640.10:FF:000009">
    <property type="entry name" value="Cystathionine gamma-synthase homolog"/>
    <property type="match status" value="1"/>
</dbReference>
<dbReference type="Gene3D" id="3.90.1150.10">
    <property type="entry name" value="Aspartate Aminotransferase, domain 1"/>
    <property type="match status" value="1"/>
</dbReference>
<dbReference type="Gene3D" id="3.40.640.10">
    <property type="entry name" value="Type I PLP-dependent aspartate aminotransferase-like (Major domain)"/>
    <property type="match status" value="1"/>
</dbReference>
<dbReference type="InterPro" id="IPR000277">
    <property type="entry name" value="Cys/Met-Metab_PyrdxlP-dep_enz"/>
</dbReference>
<dbReference type="InterPro" id="IPR054542">
    <property type="entry name" value="Cys_met_metab_PP"/>
</dbReference>
<dbReference type="InterPro" id="IPR015424">
    <property type="entry name" value="PyrdxlP-dep_Trfase"/>
</dbReference>
<dbReference type="InterPro" id="IPR015421">
    <property type="entry name" value="PyrdxlP-dep_Trfase_major"/>
</dbReference>
<dbReference type="InterPro" id="IPR015422">
    <property type="entry name" value="PyrdxlP-dep_Trfase_small"/>
</dbReference>
<dbReference type="NCBIfam" id="NF004821">
    <property type="entry name" value="PRK06176.1"/>
    <property type="match status" value="1"/>
</dbReference>
<dbReference type="NCBIfam" id="NF005810">
    <property type="entry name" value="PRK07671.1"/>
    <property type="match status" value="1"/>
</dbReference>
<dbReference type="PANTHER" id="PTHR11808:SF15">
    <property type="entry name" value="CYSTATHIONINE GAMMA-LYASE"/>
    <property type="match status" value="1"/>
</dbReference>
<dbReference type="PANTHER" id="PTHR11808">
    <property type="entry name" value="TRANS-SULFURATION ENZYME FAMILY MEMBER"/>
    <property type="match status" value="1"/>
</dbReference>
<dbReference type="Pfam" id="PF01053">
    <property type="entry name" value="Cys_Met_Meta_PP"/>
    <property type="match status" value="1"/>
</dbReference>
<dbReference type="PIRSF" id="PIRSF001434">
    <property type="entry name" value="CGS"/>
    <property type="match status" value="1"/>
</dbReference>
<dbReference type="SUPFAM" id="SSF53383">
    <property type="entry name" value="PLP-dependent transferases"/>
    <property type="match status" value="1"/>
</dbReference>
<dbReference type="PROSITE" id="PS00868">
    <property type="entry name" value="CYS_MET_METAB_PP"/>
    <property type="match status" value="1"/>
</dbReference>
<gene>
    <name type="primary">metB</name>
    <name type="ordered locus">HP_0106</name>
</gene>
<proteinExistence type="evidence at protein level"/>
<accession>P56069</accession>